<sequence>MKVKGSLKSHRNRDKNCKVVKRGGKIYIINKVKPRCKARQGS</sequence>
<organism>
    <name type="scientific">Wolbachia sp. subsp. Drosophila simulans (strain wRi)</name>
    <dbReference type="NCBI Taxonomy" id="66084"/>
    <lineage>
        <taxon>Bacteria</taxon>
        <taxon>Pseudomonadati</taxon>
        <taxon>Pseudomonadota</taxon>
        <taxon>Alphaproteobacteria</taxon>
        <taxon>Rickettsiales</taxon>
        <taxon>Anaplasmataceae</taxon>
        <taxon>Wolbachieae</taxon>
        <taxon>Wolbachia</taxon>
    </lineage>
</organism>
<keyword id="KW-0687">Ribonucleoprotein</keyword>
<keyword id="KW-0689">Ribosomal protein</keyword>
<feature type="chain" id="PRO_1000125511" description="Large ribosomal subunit protein bL36">
    <location>
        <begin position="1"/>
        <end position="42"/>
    </location>
</feature>
<protein>
    <recommendedName>
        <fullName evidence="1">Large ribosomal subunit protein bL36</fullName>
    </recommendedName>
    <alternativeName>
        <fullName evidence="2">50S ribosomal protein L36</fullName>
    </alternativeName>
</protein>
<evidence type="ECO:0000255" key="1">
    <source>
        <dbReference type="HAMAP-Rule" id="MF_00251"/>
    </source>
</evidence>
<evidence type="ECO:0000305" key="2"/>
<name>RL36_WOLWR</name>
<proteinExistence type="inferred from homology"/>
<dbReference type="EMBL" id="CP001391">
    <property type="protein sequence ID" value="ACN95234.1"/>
    <property type="molecule type" value="Genomic_DNA"/>
</dbReference>
<dbReference type="SMR" id="C0R2U2"/>
<dbReference type="STRING" id="66084.WRi_004460"/>
<dbReference type="KEGG" id="wri:WRi_004460"/>
<dbReference type="HOGENOM" id="CLU_135723_3_2_5"/>
<dbReference type="Proteomes" id="UP000001293">
    <property type="component" value="Chromosome"/>
</dbReference>
<dbReference type="GO" id="GO:1990904">
    <property type="term" value="C:ribonucleoprotein complex"/>
    <property type="evidence" value="ECO:0007669"/>
    <property type="project" value="UniProtKB-KW"/>
</dbReference>
<dbReference type="GO" id="GO:0005840">
    <property type="term" value="C:ribosome"/>
    <property type="evidence" value="ECO:0007669"/>
    <property type="project" value="UniProtKB-KW"/>
</dbReference>
<dbReference type="GO" id="GO:0003735">
    <property type="term" value="F:structural constituent of ribosome"/>
    <property type="evidence" value="ECO:0007669"/>
    <property type="project" value="InterPro"/>
</dbReference>
<dbReference type="GO" id="GO:0006412">
    <property type="term" value="P:translation"/>
    <property type="evidence" value="ECO:0007669"/>
    <property type="project" value="UniProtKB-UniRule"/>
</dbReference>
<dbReference type="HAMAP" id="MF_00251">
    <property type="entry name" value="Ribosomal_bL36"/>
    <property type="match status" value="1"/>
</dbReference>
<dbReference type="InterPro" id="IPR000473">
    <property type="entry name" value="Ribosomal_bL36"/>
</dbReference>
<dbReference type="InterPro" id="IPR035977">
    <property type="entry name" value="Ribosomal_bL36_sp"/>
</dbReference>
<dbReference type="InterPro" id="IPR047621">
    <property type="entry name" value="Ribosomal_L36_bact"/>
</dbReference>
<dbReference type="NCBIfam" id="NF002021">
    <property type="entry name" value="PRK00831.1"/>
    <property type="match status" value="1"/>
</dbReference>
<dbReference type="NCBIfam" id="TIGR01022">
    <property type="entry name" value="rpmJ_bact"/>
    <property type="match status" value="1"/>
</dbReference>
<dbReference type="PANTHER" id="PTHR47781">
    <property type="entry name" value="50S RIBOSOMAL PROTEIN L36 2"/>
    <property type="match status" value="1"/>
</dbReference>
<dbReference type="PANTHER" id="PTHR47781:SF1">
    <property type="entry name" value="LARGE RIBOSOMAL SUBUNIT PROTEIN BL36B"/>
    <property type="match status" value="1"/>
</dbReference>
<dbReference type="Pfam" id="PF00444">
    <property type="entry name" value="Ribosomal_L36"/>
    <property type="match status" value="1"/>
</dbReference>
<dbReference type="SUPFAM" id="SSF57840">
    <property type="entry name" value="Ribosomal protein L36"/>
    <property type="match status" value="1"/>
</dbReference>
<gene>
    <name evidence="1" type="primary">rpmJ</name>
    <name type="ordered locus">WRi_004460</name>
</gene>
<reference key="1">
    <citation type="journal article" date="2009" name="Proc. Natl. Acad. Sci. U.S.A.">
        <title>The mosaic genome structure of the Wolbachia wRi strain infecting Drosophila simulans.</title>
        <authorList>
            <person name="Klasson L."/>
            <person name="Westberg J."/>
            <person name="Sapountzis P."/>
            <person name="Naeslund K."/>
            <person name="Lutnaes Y."/>
            <person name="Darby A.C."/>
            <person name="Veneti Z."/>
            <person name="Chen L."/>
            <person name="Braig H.R."/>
            <person name="Garrett R."/>
            <person name="Bourtzis K."/>
            <person name="Andersson S.G."/>
        </authorList>
    </citation>
    <scope>NUCLEOTIDE SEQUENCE [LARGE SCALE GENOMIC DNA]</scope>
    <source>
        <strain>wRi</strain>
    </source>
</reference>
<accession>C0R2U2</accession>
<comment type="similarity">
    <text evidence="1">Belongs to the bacterial ribosomal protein bL36 family.</text>
</comment>